<organism>
    <name type="scientific">Methanosarcina acetivorans (strain ATCC 35395 / DSM 2834 / JCM 12185 / C2A)</name>
    <dbReference type="NCBI Taxonomy" id="188937"/>
    <lineage>
        <taxon>Archaea</taxon>
        <taxon>Methanobacteriati</taxon>
        <taxon>Methanobacteriota</taxon>
        <taxon>Stenosarchaea group</taxon>
        <taxon>Methanomicrobia</taxon>
        <taxon>Methanosarcinales</taxon>
        <taxon>Methanosarcinaceae</taxon>
        <taxon>Methanosarcina</taxon>
    </lineage>
</organism>
<comment type="function">
    <text evidence="1">Could be responsible for synthesis of pseudouridine from uracil-13 in transfer RNAs.</text>
</comment>
<comment type="catalytic activity">
    <reaction evidence="1">
        <text>uridine(13) in tRNA = pseudouridine(13) in tRNA</text>
        <dbReference type="Rhea" id="RHEA:42540"/>
        <dbReference type="Rhea" id="RHEA-COMP:10105"/>
        <dbReference type="Rhea" id="RHEA-COMP:10106"/>
        <dbReference type="ChEBI" id="CHEBI:65314"/>
        <dbReference type="ChEBI" id="CHEBI:65315"/>
        <dbReference type="EC" id="5.4.99.27"/>
    </reaction>
</comment>
<comment type="similarity">
    <text evidence="1">Belongs to the pseudouridine synthase TruD family.</text>
</comment>
<dbReference type="EC" id="5.4.99.27" evidence="1"/>
<dbReference type="EMBL" id="AE010299">
    <property type="protein sequence ID" value="AAM06642.1"/>
    <property type="molecule type" value="Genomic_DNA"/>
</dbReference>
<dbReference type="SMR" id="Q8TKX2"/>
<dbReference type="FunCoup" id="Q8TKX2">
    <property type="interactions" value="89"/>
</dbReference>
<dbReference type="STRING" id="188937.MA_3271"/>
<dbReference type="EnsemblBacteria" id="AAM06642">
    <property type="protein sequence ID" value="AAM06642"/>
    <property type="gene ID" value="MA_3271"/>
</dbReference>
<dbReference type="KEGG" id="mac:MA_3271"/>
<dbReference type="HOGENOM" id="CLU_005281_4_1_2"/>
<dbReference type="InParanoid" id="Q8TKX2"/>
<dbReference type="PhylomeDB" id="Q8TKX2"/>
<dbReference type="Proteomes" id="UP000002487">
    <property type="component" value="Chromosome"/>
</dbReference>
<dbReference type="GO" id="GO:0009982">
    <property type="term" value="F:pseudouridine synthase activity"/>
    <property type="evidence" value="ECO:0000318"/>
    <property type="project" value="GO_Central"/>
</dbReference>
<dbReference type="GO" id="GO:0003723">
    <property type="term" value="F:RNA binding"/>
    <property type="evidence" value="ECO:0007669"/>
    <property type="project" value="InterPro"/>
</dbReference>
<dbReference type="GO" id="GO:0160150">
    <property type="term" value="F:tRNA pseudouridine(13) synthase activity"/>
    <property type="evidence" value="ECO:0007669"/>
    <property type="project" value="UniProtKB-EC"/>
</dbReference>
<dbReference type="GO" id="GO:0001522">
    <property type="term" value="P:pseudouridine synthesis"/>
    <property type="evidence" value="ECO:0000318"/>
    <property type="project" value="GO_Central"/>
</dbReference>
<dbReference type="GO" id="GO:0031119">
    <property type="term" value="P:tRNA pseudouridine synthesis"/>
    <property type="evidence" value="ECO:0007669"/>
    <property type="project" value="UniProtKB-UniRule"/>
</dbReference>
<dbReference type="CDD" id="cd02577">
    <property type="entry name" value="PSTD1"/>
    <property type="match status" value="1"/>
</dbReference>
<dbReference type="FunFam" id="3.30.2350.20:FF:000023">
    <property type="entry name" value="Probable tRNA pseudouridine synthase D"/>
    <property type="match status" value="1"/>
</dbReference>
<dbReference type="FunFam" id="3.30.70.3160:FF:000001">
    <property type="entry name" value="Probable tRNA pseudouridine synthase D"/>
    <property type="match status" value="1"/>
</dbReference>
<dbReference type="Gene3D" id="1.10.1510.30">
    <property type="match status" value="1"/>
</dbReference>
<dbReference type="Gene3D" id="3.30.70.3160">
    <property type="match status" value="1"/>
</dbReference>
<dbReference type="Gene3D" id="3.30.2350.20">
    <property type="entry name" value="TruD, catalytic domain"/>
    <property type="match status" value="1"/>
</dbReference>
<dbReference type="HAMAP" id="MF_01082">
    <property type="entry name" value="TruD"/>
    <property type="match status" value="1"/>
</dbReference>
<dbReference type="InterPro" id="IPR020103">
    <property type="entry name" value="PsdUridine_synth_cat_dom_sf"/>
</dbReference>
<dbReference type="InterPro" id="IPR001656">
    <property type="entry name" value="PsdUridine_synth_TruD"/>
</dbReference>
<dbReference type="InterPro" id="IPR020119">
    <property type="entry name" value="PsdUridine_synth_TruD_CS"/>
</dbReference>
<dbReference type="InterPro" id="IPR011760">
    <property type="entry name" value="PsdUridine_synth_TruD_insert"/>
</dbReference>
<dbReference type="InterPro" id="IPR042214">
    <property type="entry name" value="TruD_catalytic"/>
</dbReference>
<dbReference type="NCBIfam" id="TIGR00094">
    <property type="entry name" value="tRNA_TruD_broad"/>
    <property type="match status" value="1"/>
</dbReference>
<dbReference type="PANTHER" id="PTHR13326:SF21">
    <property type="entry name" value="PSEUDOURIDYLATE SYNTHASE PUS7L"/>
    <property type="match status" value="1"/>
</dbReference>
<dbReference type="PANTHER" id="PTHR13326">
    <property type="entry name" value="TRNA PSEUDOURIDINE SYNTHASE D"/>
    <property type="match status" value="1"/>
</dbReference>
<dbReference type="Pfam" id="PF01142">
    <property type="entry name" value="TruD"/>
    <property type="match status" value="1"/>
</dbReference>
<dbReference type="PIRSF" id="PIRSF037016">
    <property type="entry name" value="Pseudouridin_synth_euk_prd"/>
    <property type="match status" value="1"/>
</dbReference>
<dbReference type="SUPFAM" id="SSF55120">
    <property type="entry name" value="Pseudouridine synthase"/>
    <property type="match status" value="1"/>
</dbReference>
<dbReference type="PROSITE" id="PS50984">
    <property type="entry name" value="TRUD"/>
    <property type="match status" value="1"/>
</dbReference>
<dbReference type="PROSITE" id="PS01268">
    <property type="entry name" value="UPF0024"/>
    <property type="match status" value="1"/>
</dbReference>
<sequence length="441" mass="50058">MQPMEVPEIEKQIGINLYSTNTEGLGGRLRQEVEDFIVKEITNREEGKDGRYLVLELTKRDWDTHHFTRTLAKILQISQKRISVAGTKDKRALTTQKISIFDIDALEIEKIHLKDVELKVLGRSRKSVELGDLWGNEFIITIRDISSSPEETRTILEKTNSKVLTQGGVPNFFGVQRFGSVRSVTHLVGKAIVEGNFEKAAMLYIAEPFPEEPEETKAARQFVKETRDFKEGLKTYPLRLGHERAMMNHLISNPEDYSGAFSVLPKNLYRMFVHAYQSYIYNMILCRRIESGISLNRAVEGDIVCFRNEAGLPDSSKTEKVTSETVNAMNRLIKHGRAFITAPLPGFNTEFASGVPGEIESKILKELRVSLEGFNVEEFPEMSSKGTRREVLLQVEPKFEVGEDELNPGKSKTVLEFMLPKGSYATTVLREYMKVDPLQMS</sequence>
<gene>
    <name evidence="1" type="primary">truD</name>
    <name type="ordered locus">MA_3271</name>
</gene>
<name>TRUD_METAC</name>
<protein>
    <recommendedName>
        <fullName evidence="1">Probable tRNA pseudouridine synthase D</fullName>
        <ecNumber evidence="1">5.4.99.27</ecNumber>
    </recommendedName>
    <alternativeName>
        <fullName evidence="1">tRNA pseudouridine(13) synthase</fullName>
    </alternativeName>
    <alternativeName>
        <fullName evidence="1">tRNA pseudouridylate synthase D</fullName>
    </alternativeName>
    <alternativeName>
        <fullName evidence="1">tRNA-uridine isomerase D</fullName>
    </alternativeName>
</protein>
<feature type="chain" id="PRO_0000152539" description="Probable tRNA pseudouridine synthase D">
    <location>
        <begin position="1"/>
        <end position="441"/>
    </location>
</feature>
<feature type="domain" description="TRUD" evidence="1">
    <location>
        <begin position="168"/>
        <end position="393"/>
    </location>
</feature>
<feature type="active site" description="Nucleophile" evidence="1">
    <location>
        <position position="89"/>
    </location>
</feature>
<accession>Q8TKX2</accession>
<reference key="1">
    <citation type="journal article" date="2002" name="Genome Res.">
        <title>The genome of Methanosarcina acetivorans reveals extensive metabolic and physiological diversity.</title>
        <authorList>
            <person name="Galagan J.E."/>
            <person name="Nusbaum C."/>
            <person name="Roy A."/>
            <person name="Endrizzi M.G."/>
            <person name="Macdonald P."/>
            <person name="FitzHugh W."/>
            <person name="Calvo S."/>
            <person name="Engels R."/>
            <person name="Smirnov S."/>
            <person name="Atnoor D."/>
            <person name="Brown A."/>
            <person name="Allen N."/>
            <person name="Naylor J."/>
            <person name="Stange-Thomann N."/>
            <person name="DeArellano K."/>
            <person name="Johnson R."/>
            <person name="Linton L."/>
            <person name="McEwan P."/>
            <person name="McKernan K."/>
            <person name="Talamas J."/>
            <person name="Tirrell A."/>
            <person name="Ye W."/>
            <person name="Zimmer A."/>
            <person name="Barber R.D."/>
            <person name="Cann I."/>
            <person name="Graham D.E."/>
            <person name="Grahame D.A."/>
            <person name="Guss A.M."/>
            <person name="Hedderich R."/>
            <person name="Ingram-Smith C."/>
            <person name="Kuettner H.C."/>
            <person name="Krzycki J.A."/>
            <person name="Leigh J.A."/>
            <person name="Li W."/>
            <person name="Liu J."/>
            <person name="Mukhopadhyay B."/>
            <person name="Reeve J.N."/>
            <person name="Smith K."/>
            <person name="Springer T.A."/>
            <person name="Umayam L.A."/>
            <person name="White O."/>
            <person name="White R.H."/>
            <person name="de Macario E.C."/>
            <person name="Ferry J.G."/>
            <person name="Jarrell K.F."/>
            <person name="Jing H."/>
            <person name="Macario A.J.L."/>
            <person name="Paulsen I.T."/>
            <person name="Pritchett M."/>
            <person name="Sowers K.R."/>
            <person name="Swanson R.V."/>
            <person name="Zinder S.H."/>
            <person name="Lander E."/>
            <person name="Metcalf W.W."/>
            <person name="Birren B."/>
        </authorList>
    </citation>
    <scope>NUCLEOTIDE SEQUENCE [LARGE SCALE GENOMIC DNA]</scope>
    <source>
        <strain>ATCC 35395 / DSM 2834 / JCM 12185 / C2A</strain>
    </source>
</reference>
<proteinExistence type="inferred from homology"/>
<keyword id="KW-0413">Isomerase</keyword>
<keyword id="KW-1185">Reference proteome</keyword>
<keyword id="KW-0819">tRNA processing</keyword>
<evidence type="ECO:0000255" key="1">
    <source>
        <dbReference type="HAMAP-Rule" id="MF_01082"/>
    </source>
</evidence>